<evidence type="ECO:0000255" key="1">
    <source>
        <dbReference type="HAMAP-Rule" id="MF_00373"/>
    </source>
</evidence>
<evidence type="ECO:0000256" key="2">
    <source>
        <dbReference type="SAM" id="MobiDB-lite"/>
    </source>
</evidence>
<evidence type="ECO:0000305" key="3"/>
<keyword id="KW-1185">Reference proteome</keyword>
<keyword id="KW-0687">Ribonucleoprotein</keyword>
<keyword id="KW-0689">Ribosomal protein</keyword>
<feature type="chain" id="PRO_1000007180" description="Large ribosomal subunit protein bL28">
    <location>
        <begin position="1"/>
        <end position="102"/>
    </location>
</feature>
<feature type="region of interest" description="Disordered" evidence="2">
    <location>
        <begin position="1"/>
        <end position="20"/>
    </location>
</feature>
<dbReference type="EMBL" id="CP000494">
    <property type="protein sequence ID" value="ABQ39397.1"/>
    <property type="molecule type" value="Genomic_DNA"/>
</dbReference>
<dbReference type="RefSeq" id="WP_012047288.1">
    <property type="nucleotide sequence ID" value="NC_009485.1"/>
</dbReference>
<dbReference type="SMR" id="A5ETA3"/>
<dbReference type="STRING" id="288000.BBta_7548"/>
<dbReference type="KEGG" id="bbt:BBta_7548"/>
<dbReference type="eggNOG" id="COG0227">
    <property type="taxonomic scope" value="Bacteria"/>
</dbReference>
<dbReference type="HOGENOM" id="CLU_064548_4_2_5"/>
<dbReference type="OrthoDB" id="9805609at2"/>
<dbReference type="Proteomes" id="UP000000246">
    <property type="component" value="Chromosome"/>
</dbReference>
<dbReference type="GO" id="GO:0022625">
    <property type="term" value="C:cytosolic large ribosomal subunit"/>
    <property type="evidence" value="ECO:0007669"/>
    <property type="project" value="TreeGrafter"/>
</dbReference>
<dbReference type="GO" id="GO:0003735">
    <property type="term" value="F:structural constituent of ribosome"/>
    <property type="evidence" value="ECO:0007669"/>
    <property type="project" value="InterPro"/>
</dbReference>
<dbReference type="GO" id="GO:0006412">
    <property type="term" value="P:translation"/>
    <property type="evidence" value="ECO:0007669"/>
    <property type="project" value="UniProtKB-UniRule"/>
</dbReference>
<dbReference type="Gene3D" id="2.30.170.40">
    <property type="entry name" value="Ribosomal protein L28/L24"/>
    <property type="match status" value="1"/>
</dbReference>
<dbReference type="HAMAP" id="MF_00373">
    <property type="entry name" value="Ribosomal_bL28"/>
    <property type="match status" value="1"/>
</dbReference>
<dbReference type="InterPro" id="IPR026569">
    <property type="entry name" value="Ribosomal_bL28"/>
</dbReference>
<dbReference type="InterPro" id="IPR034704">
    <property type="entry name" value="Ribosomal_bL28/bL31-like_sf"/>
</dbReference>
<dbReference type="InterPro" id="IPR001383">
    <property type="entry name" value="Ribosomal_bL28_bact-type"/>
</dbReference>
<dbReference type="InterPro" id="IPR037147">
    <property type="entry name" value="Ribosomal_bL28_sf"/>
</dbReference>
<dbReference type="NCBIfam" id="TIGR00009">
    <property type="entry name" value="L28"/>
    <property type="match status" value="1"/>
</dbReference>
<dbReference type="PANTHER" id="PTHR13528">
    <property type="entry name" value="39S RIBOSOMAL PROTEIN L28, MITOCHONDRIAL"/>
    <property type="match status" value="1"/>
</dbReference>
<dbReference type="PANTHER" id="PTHR13528:SF2">
    <property type="entry name" value="LARGE RIBOSOMAL SUBUNIT PROTEIN BL28M"/>
    <property type="match status" value="1"/>
</dbReference>
<dbReference type="Pfam" id="PF00830">
    <property type="entry name" value="Ribosomal_L28"/>
    <property type="match status" value="1"/>
</dbReference>
<dbReference type="SUPFAM" id="SSF143800">
    <property type="entry name" value="L28p-like"/>
    <property type="match status" value="1"/>
</dbReference>
<protein>
    <recommendedName>
        <fullName evidence="1">Large ribosomal subunit protein bL28</fullName>
    </recommendedName>
    <alternativeName>
        <fullName evidence="3">50S ribosomal protein L28</fullName>
    </alternativeName>
</protein>
<gene>
    <name evidence="1" type="primary">rpmB</name>
    <name type="ordered locus">BBta_7548</name>
</gene>
<sequence length="102" mass="11034">MSRRCELTAKGPQVGHKVSHSNIKTKRRFLPNLCNVTFISDALGRNVRLRVSTNAIKSVDHNGGLDAYLLKANAATLSPRALELKRAIEKKAAEAAPVAKAS</sequence>
<proteinExistence type="inferred from homology"/>
<accession>A5ETA3</accession>
<comment type="similarity">
    <text evidence="1">Belongs to the bacterial ribosomal protein bL28 family.</text>
</comment>
<organism>
    <name type="scientific">Bradyrhizobium sp. (strain BTAi1 / ATCC BAA-1182)</name>
    <dbReference type="NCBI Taxonomy" id="288000"/>
    <lineage>
        <taxon>Bacteria</taxon>
        <taxon>Pseudomonadati</taxon>
        <taxon>Pseudomonadota</taxon>
        <taxon>Alphaproteobacteria</taxon>
        <taxon>Hyphomicrobiales</taxon>
        <taxon>Nitrobacteraceae</taxon>
        <taxon>Bradyrhizobium</taxon>
    </lineage>
</organism>
<reference key="1">
    <citation type="journal article" date="2007" name="Science">
        <title>Legumes symbioses: absence of nod genes in photosynthetic bradyrhizobia.</title>
        <authorList>
            <person name="Giraud E."/>
            <person name="Moulin L."/>
            <person name="Vallenet D."/>
            <person name="Barbe V."/>
            <person name="Cytryn E."/>
            <person name="Avarre J.-C."/>
            <person name="Jaubert M."/>
            <person name="Simon D."/>
            <person name="Cartieaux F."/>
            <person name="Prin Y."/>
            <person name="Bena G."/>
            <person name="Hannibal L."/>
            <person name="Fardoux J."/>
            <person name="Kojadinovic M."/>
            <person name="Vuillet L."/>
            <person name="Lajus A."/>
            <person name="Cruveiller S."/>
            <person name="Rouy Z."/>
            <person name="Mangenot S."/>
            <person name="Segurens B."/>
            <person name="Dossat C."/>
            <person name="Franck W.L."/>
            <person name="Chang W.-S."/>
            <person name="Saunders E."/>
            <person name="Bruce D."/>
            <person name="Richardson P."/>
            <person name="Normand P."/>
            <person name="Dreyfus B."/>
            <person name="Pignol D."/>
            <person name="Stacey G."/>
            <person name="Emerich D."/>
            <person name="Vermeglio A."/>
            <person name="Medigue C."/>
            <person name="Sadowsky M."/>
        </authorList>
    </citation>
    <scope>NUCLEOTIDE SEQUENCE [LARGE SCALE GENOMIC DNA]</scope>
    <source>
        <strain>BTAi1 / ATCC BAA-1182</strain>
    </source>
</reference>
<name>RL28_BRASB</name>